<gene>
    <name type="primary">PUMP1</name>
    <name type="synonym">UCP1</name>
    <name type="ordered locus">At3g54110</name>
    <name type="ORF">F24B22.70</name>
</gene>
<organism>
    <name type="scientific">Arabidopsis thaliana</name>
    <name type="common">Mouse-ear cress</name>
    <dbReference type="NCBI Taxonomy" id="3702"/>
    <lineage>
        <taxon>Eukaryota</taxon>
        <taxon>Viridiplantae</taxon>
        <taxon>Streptophyta</taxon>
        <taxon>Embryophyta</taxon>
        <taxon>Tracheophyta</taxon>
        <taxon>Spermatophyta</taxon>
        <taxon>Magnoliopsida</taxon>
        <taxon>eudicotyledons</taxon>
        <taxon>Gunneridae</taxon>
        <taxon>Pentapetalae</taxon>
        <taxon>rosids</taxon>
        <taxon>malvids</taxon>
        <taxon>Brassicales</taxon>
        <taxon>Brassicaceae</taxon>
        <taxon>Camelineae</taxon>
        <taxon>Arabidopsis</taxon>
    </lineage>
</organism>
<name>PUMP1_ARATH</name>
<comment type="function">
    <text evidence="3 4 6 7 9 10">PUMPS are mitochondrial transporter proteins that create proton leaks across the inner mitochondrial membrane, thus uncoupling oxidative phosphorylation. This leads to a decrease in the efficiency of oxidative phosphorylation and an increase in heat production. Is involved in protecting plant cells against oxidative stress damage and maintaining the redox balance of the mitochondrial electron transport chain to facilitate photosynthetic metabolism. May play a regulatory role during photorespiration.</text>
</comment>
<comment type="subcellular location">
    <subcellularLocation>
        <location evidence="1">Mitochondrion inner membrane</location>
        <topology evidence="1">Multi-pass membrane protein</topology>
    </subcellularLocation>
</comment>
<comment type="tissue specificity">
    <text evidence="6 11">Widely expressed.</text>
</comment>
<comment type="induction">
    <text evidence="5 8 11">By cold stress, high light and chloramphenicol.</text>
</comment>
<comment type="disruption phenotype">
    <text evidence="6">Slight reduction of shoot mass.</text>
</comment>
<comment type="miscellaneous">
    <text evidence="13">Over-expression of Arabidopsis UCP1 in tobacco plants increases tolerance to oxidative stress caused by exogenous hydrogen peroxide, or by drought and salt.</text>
</comment>
<comment type="similarity">
    <text evidence="12">Belongs to the mitochondrial carrier (TC 2.A.29) family.</text>
</comment>
<comment type="sequence caution" evidence="12">
    <conflict type="erroneous initiation">
        <sequence resource="EMBL-CDS" id="BAD95028"/>
    </conflict>
    <text>Truncated N-terminus.</text>
</comment>
<protein>
    <recommendedName>
        <fullName>Mitochondrial uncoupling protein 1</fullName>
        <shortName>AtPUMP1</shortName>
    </recommendedName>
</protein>
<feature type="chain" id="PRO_0000420255" description="Mitochondrial uncoupling protein 1">
    <location>
        <begin position="1"/>
        <end position="306"/>
    </location>
</feature>
<feature type="transmembrane region" description="Helical; Name=1" evidence="2">
    <location>
        <begin position="15"/>
        <end position="35"/>
    </location>
</feature>
<feature type="transmembrane region" description="Helical; Name=2" evidence="2">
    <location>
        <begin position="71"/>
        <end position="91"/>
    </location>
</feature>
<feature type="transmembrane region" description="Helical; Name=3" evidence="2">
    <location>
        <begin position="118"/>
        <end position="138"/>
    </location>
</feature>
<feature type="transmembrane region" description="Helical; Name=4" evidence="2">
    <location>
        <begin position="177"/>
        <end position="197"/>
    </location>
</feature>
<feature type="transmembrane region" description="Helical; Name=5" evidence="2">
    <location>
        <begin position="218"/>
        <end position="238"/>
    </location>
</feature>
<feature type="transmembrane region" description="Helical; Name=6" evidence="2">
    <location>
        <begin position="269"/>
        <end position="289"/>
    </location>
</feature>
<feature type="repeat" description="Solcar 1">
    <location>
        <begin position="9"/>
        <end position="102"/>
    </location>
</feature>
<feature type="repeat" description="Solcar 2">
    <location>
        <begin position="112"/>
        <end position="203"/>
    </location>
</feature>
<feature type="repeat" description="Solcar 3">
    <location>
        <begin position="212"/>
        <end position="296"/>
    </location>
</feature>
<feature type="mutagenesis site" description="Reduces proton transport activity 3-fold." evidence="7">
    <original>C</original>
    <variation>A</variation>
    <location>
        <position position="28"/>
    </location>
</feature>
<feature type="mutagenesis site" description="Reduces proton transport activity 3-fold." evidence="7">
    <original>H</original>
    <variation>L</variation>
    <location>
        <position position="83"/>
    </location>
</feature>
<feature type="mutagenesis site" description="Reduces proton transport activity 3-fold." evidence="7">
    <original>K</original>
    <variation>H</variation>
    <location>
        <position position="147"/>
    </location>
</feature>
<feature type="mutagenesis site" description="Slightly reduces proton transport activity." evidence="7">
    <original>R</original>
    <variation>L</variation>
    <location>
        <position position="155"/>
    </location>
</feature>
<feature type="mutagenesis site" description="Reduces proton transport activity 3-fold." evidence="7">
    <original>Y</original>
    <variation>F</variation>
    <location>
        <position position="269"/>
    </location>
</feature>
<feature type="sequence conflict" description="In Ref. 1; CAA11757." evidence="12" ref="1">
    <original>G</original>
    <variation>V</variation>
    <location>
        <position position="178"/>
    </location>
</feature>
<keyword id="KW-0472">Membrane</keyword>
<keyword id="KW-0496">Mitochondrion</keyword>
<keyword id="KW-0999">Mitochondrion inner membrane</keyword>
<keyword id="KW-1185">Reference proteome</keyword>
<keyword id="KW-0677">Repeat</keyword>
<keyword id="KW-0346">Stress response</keyword>
<keyword id="KW-0812">Transmembrane</keyword>
<keyword id="KW-1133">Transmembrane helix</keyword>
<keyword id="KW-0813">Transport</keyword>
<dbReference type="EMBL" id="AJ223983">
    <property type="protein sequence ID" value="CAA11757.1"/>
    <property type="molecule type" value="mRNA"/>
</dbReference>
<dbReference type="EMBL" id="AJ001264">
    <property type="protein sequence ID" value="CAA04638.1"/>
    <property type="molecule type" value="mRNA"/>
</dbReference>
<dbReference type="EMBL" id="Y18291">
    <property type="protein sequence ID" value="CAA77109.1"/>
    <property type="molecule type" value="Genomic_DNA"/>
</dbReference>
<dbReference type="EMBL" id="AF146226">
    <property type="protein sequence ID" value="AAF66705.1"/>
    <property type="molecule type" value="mRNA"/>
</dbReference>
<dbReference type="EMBL" id="AL132957">
    <property type="protein sequence ID" value="CAB70985.1"/>
    <property type="molecule type" value="Genomic_DNA"/>
</dbReference>
<dbReference type="EMBL" id="CP002686">
    <property type="protein sequence ID" value="AEE79189.1"/>
    <property type="molecule type" value="Genomic_DNA"/>
</dbReference>
<dbReference type="EMBL" id="AY056272">
    <property type="protein sequence ID" value="AAL07121.1"/>
    <property type="molecule type" value="mRNA"/>
</dbReference>
<dbReference type="EMBL" id="AY091185">
    <property type="protein sequence ID" value="AAM14124.1"/>
    <property type="molecule type" value="mRNA"/>
</dbReference>
<dbReference type="EMBL" id="AK221112">
    <property type="protein sequence ID" value="BAD95028.1"/>
    <property type="status" value="ALT_INIT"/>
    <property type="molecule type" value="mRNA"/>
</dbReference>
<dbReference type="PIR" id="T47570">
    <property type="entry name" value="T47570"/>
</dbReference>
<dbReference type="PIR" id="T52024">
    <property type="entry name" value="T52024"/>
</dbReference>
<dbReference type="RefSeq" id="NP_190979.1">
    <property type="nucleotide sequence ID" value="NM_115271.5"/>
</dbReference>
<dbReference type="BioGRID" id="9895">
    <property type="interactions" value="1"/>
</dbReference>
<dbReference type="FunCoup" id="O81845">
    <property type="interactions" value="1295"/>
</dbReference>
<dbReference type="STRING" id="3702.O81845"/>
<dbReference type="TCDB" id="2.A.29.3.3">
    <property type="family name" value="the mitochondrial carrier (mc) family"/>
</dbReference>
<dbReference type="PaxDb" id="3702-AT3G54110.1"/>
<dbReference type="ProteomicsDB" id="226359"/>
<dbReference type="EnsemblPlants" id="AT3G54110.1">
    <property type="protein sequence ID" value="AT3G54110.1"/>
    <property type="gene ID" value="AT3G54110"/>
</dbReference>
<dbReference type="GeneID" id="824578"/>
<dbReference type="Gramene" id="AT3G54110.1">
    <property type="protein sequence ID" value="AT3G54110.1"/>
    <property type="gene ID" value="AT3G54110"/>
</dbReference>
<dbReference type="KEGG" id="ath:AT3G54110"/>
<dbReference type="Araport" id="AT3G54110"/>
<dbReference type="TAIR" id="AT3G54110">
    <property type="gene designation" value="PUMP1"/>
</dbReference>
<dbReference type="eggNOG" id="KOG0753">
    <property type="taxonomic scope" value="Eukaryota"/>
</dbReference>
<dbReference type="HOGENOM" id="CLU_015166_14_2_1"/>
<dbReference type="InParanoid" id="O81845"/>
<dbReference type="OMA" id="HARRYCS"/>
<dbReference type="OrthoDB" id="1030034at2759"/>
<dbReference type="PhylomeDB" id="O81845"/>
<dbReference type="PRO" id="PR:O81845"/>
<dbReference type="Proteomes" id="UP000006548">
    <property type="component" value="Chromosome 3"/>
</dbReference>
<dbReference type="ExpressionAtlas" id="O81845">
    <property type="expression patterns" value="baseline and differential"/>
</dbReference>
<dbReference type="GO" id="GO:0005829">
    <property type="term" value="C:cytosol"/>
    <property type="evidence" value="ECO:0007005"/>
    <property type="project" value="TAIR"/>
</dbReference>
<dbReference type="GO" id="GO:0005743">
    <property type="term" value="C:mitochondrial inner membrane"/>
    <property type="evidence" value="ECO:0000314"/>
    <property type="project" value="TAIR"/>
</dbReference>
<dbReference type="GO" id="GO:0005739">
    <property type="term" value="C:mitochondrion"/>
    <property type="evidence" value="ECO:0007005"/>
    <property type="project" value="TAIR"/>
</dbReference>
<dbReference type="GO" id="GO:0000325">
    <property type="term" value="C:plant-type vacuole"/>
    <property type="evidence" value="ECO:0007005"/>
    <property type="project" value="TAIR"/>
</dbReference>
<dbReference type="GO" id="GO:0009506">
    <property type="term" value="C:plasmodesma"/>
    <property type="evidence" value="ECO:0007005"/>
    <property type="project" value="TAIR"/>
</dbReference>
<dbReference type="GO" id="GO:0015171">
    <property type="term" value="F:amino acid transmembrane transporter activity"/>
    <property type="evidence" value="ECO:0000314"/>
    <property type="project" value="TAIR"/>
</dbReference>
<dbReference type="GO" id="GO:0017077">
    <property type="term" value="F:oxidative phosphorylation uncoupler activity"/>
    <property type="evidence" value="ECO:0000314"/>
    <property type="project" value="TAIR"/>
</dbReference>
<dbReference type="GO" id="GO:0003333">
    <property type="term" value="P:amino acid transmembrane transport"/>
    <property type="evidence" value="ECO:0000314"/>
    <property type="project" value="TAIR"/>
</dbReference>
<dbReference type="GO" id="GO:0009853">
    <property type="term" value="P:photorespiration"/>
    <property type="evidence" value="ECO:0000315"/>
    <property type="project" value="TAIR"/>
</dbReference>
<dbReference type="GO" id="GO:0015979">
    <property type="term" value="P:photosynthesis"/>
    <property type="evidence" value="ECO:0000315"/>
    <property type="project" value="TAIR"/>
</dbReference>
<dbReference type="FunFam" id="1.50.40.10:FF:000019">
    <property type="entry name" value="Mitochondrial uncoupling protein 1"/>
    <property type="match status" value="1"/>
</dbReference>
<dbReference type="Gene3D" id="1.50.40.10">
    <property type="entry name" value="Mitochondrial carrier domain"/>
    <property type="match status" value="1"/>
</dbReference>
<dbReference type="InterPro" id="IPR002067">
    <property type="entry name" value="Mit_carrier"/>
</dbReference>
<dbReference type="InterPro" id="IPR050391">
    <property type="entry name" value="Mito_Metabolite_Transporter"/>
</dbReference>
<dbReference type="InterPro" id="IPR018108">
    <property type="entry name" value="Mitochondrial_sb/sol_carrier"/>
</dbReference>
<dbReference type="InterPro" id="IPR023395">
    <property type="entry name" value="Mt_carrier_dom_sf"/>
</dbReference>
<dbReference type="PANTHER" id="PTHR45618">
    <property type="entry name" value="MITOCHONDRIAL DICARBOXYLATE CARRIER-RELATED"/>
    <property type="match status" value="1"/>
</dbReference>
<dbReference type="Pfam" id="PF00153">
    <property type="entry name" value="Mito_carr"/>
    <property type="match status" value="3"/>
</dbReference>
<dbReference type="PRINTS" id="PR00784">
    <property type="entry name" value="MTUNCOUPLING"/>
</dbReference>
<dbReference type="SUPFAM" id="SSF103506">
    <property type="entry name" value="Mitochondrial carrier"/>
    <property type="match status" value="1"/>
</dbReference>
<dbReference type="PROSITE" id="PS50920">
    <property type="entry name" value="SOLCAR"/>
    <property type="match status" value="3"/>
</dbReference>
<proteinExistence type="evidence at protein level"/>
<sequence>MVAAGKSDLSLPKTFACSAFAACVGEVCTIPLDTAKVRLQLQKSALAGDVTLPKYRGLLGTVGTIAREEGLRSLWKGVVPGLHRQCLFGGLRIGMYEPVKNLYVGKDFVGDVPLSKKILAGLTTGALGIMVANPTDLVKVRLQAEGKLAAGAPRRYSGALNAYSTIVRQEGVRALWTGLGPNVARNAIINAAELASYDQVKETILKIPGFTDNVVTHILSGLGAGFFAVCIGSPVDVVKSRMMGDSGAYKGTIDCFVKTLKSDGPMAFYKGFIPNFGRLGSWNVIMFLTLEQAKKYVRELDASKRN</sequence>
<accession>O81845</accession>
<accession>O65623</accession>
<accession>Q56Z57</accession>
<reference key="1">
    <citation type="journal article" date="1998" name="FEBS Lett.">
        <title>AtPUMP: an Arabidopsis gene encoding a plant uncoupling mitochondrial protein.</title>
        <authorList>
            <person name="Maia I.G."/>
            <person name="Benedetti C.E."/>
            <person name="Leite A."/>
            <person name="Turcinelli S.R."/>
            <person name="Vercesi A.E."/>
            <person name="Arruda P."/>
        </authorList>
    </citation>
    <scope>NUCLEOTIDE SEQUENCE [MRNA]</scope>
    <scope>TISSUE SPECIFICITY</scope>
    <scope>INDUCTION BY COLD</scope>
    <source>
        <strain>cv. Columbia</strain>
    </source>
</reference>
<reference key="2">
    <citation type="submission" date="1997-08" db="EMBL/GenBank/DDBJ databases">
        <title>Arabidopsis thaliana mitochondrial uncoupling protein.</title>
        <authorList>
            <person name="Laloi M."/>
            <person name="Klein M."/>
            <person name="Mueller-Roeber B."/>
            <person name="Willmitzer L."/>
        </authorList>
    </citation>
    <scope>NUCLEOTIDE SEQUENCE [GENOMIC DNA / MRNA]</scope>
    <source>
        <strain>cv. Columbia</strain>
        <strain>cv. Landsberg erecta</strain>
    </source>
</reference>
<reference key="3">
    <citation type="submission" date="1999-04" db="EMBL/GenBank/DDBJ databases">
        <title>Expression of a plant mitochondrial uncoupling protein in yeast.</title>
        <authorList>
            <person name="Dombrowski H.D."/>
            <person name="Cousins S.K."/>
            <person name="Harris M.A."/>
            <person name="Hanson M.R."/>
        </authorList>
    </citation>
    <scope>NUCLEOTIDE SEQUENCE [MRNA]</scope>
    <source>
        <strain>cv. Columbia</strain>
    </source>
</reference>
<reference key="4">
    <citation type="journal article" date="2000" name="Nature">
        <title>Sequence and analysis of chromosome 3 of the plant Arabidopsis thaliana.</title>
        <authorList>
            <person name="Salanoubat M."/>
            <person name="Lemcke K."/>
            <person name="Rieger M."/>
            <person name="Ansorge W."/>
            <person name="Unseld M."/>
            <person name="Fartmann B."/>
            <person name="Valle G."/>
            <person name="Bloecker H."/>
            <person name="Perez-Alonso M."/>
            <person name="Obermaier B."/>
            <person name="Delseny M."/>
            <person name="Boutry M."/>
            <person name="Grivell L.A."/>
            <person name="Mache R."/>
            <person name="Puigdomenech P."/>
            <person name="De Simone V."/>
            <person name="Choisne N."/>
            <person name="Artiguenave F."/>
            <person name="Robert C."/>
            <person name="Brottier P."/>
            <person name="Wincker P."/>
            <person name="Cattolico L."/>
            <person name="Weissenbach J."/>
            <person name="Saurin W."/>
            <person name="Quetier F."/>
            <person name="Schaefer M."/>
            <person name="Mueller-Auer S."/>
            <person name="Gabel C."/>
            <person name="Fuchs M."/>
            <person name="Benes V."/>
            <person name="Wurmbach E."/>
            <person name="Drzonek H."/>
            <person name="Erfle H."/>
            <person name="Jordan N."/>
            <person name="Bangert S."/>
            <person name="Wiedelmann R."/>
            <person name="Kranz H."/>
            <person name="Voss H."/>
            <person name="Holland R."/>
            <person name="Brandt P."/>
            <person name="Nyakatura G."/>
            <person name="Vezzi A."/>
            <person name="D'Angelo M."/>
            <person name="Pallavicini A."/>
            <person name="Toppo S."/>
            <person name="Simionati B."/>
            <person name="Conrad A."/>
            <person name="Hornischer K."/>
            <person name="Kauer G."/>
            <person name="Loehnert T.-H."/>
            <person name="Nordsiek G."/>
            <person name="Reichelt J."/>
            <person name="Scharfe M."/>
            <person name="Schoen O."/>
            <person name="Bargues M."/>
            <person name="Terol J."/>
            <person name="Climent J."/>
            <person name="Navarro P."/>
            <person name="Collado C."/>
            <person name="Perez-Perez A."/>
            <person name="Ottenwaelder B."/>
            <person name="Duchemin D."/>
            <person name="Cooke R."/>
            <person name="Laudie M."/>
            <person name="Berger-Llauro C."/>
            <person name="Purnelle B."/>
            <person name="Masuy D."/>
            <person name="de Haan M."/>
            <person name="Maarse A.C."/>
            <person name="Alcaraz J.-P."/>
            <person name="Cottet A."/>
            <person name="Casacuberta E."/>
            <person name="Monfort A."/>
            <person name="Argiriou A."/>
            <person name="Flores M."/>
            <person name="Liguori R."/>
            <person name="Vitale D."/>
            <person name="Mannhaupt G."/>
            <person name="Haase D."/>
            <person name="Schoof H."/>
            <person name="Rudd S."/>
            <person name="Zaccaria P."/>
            <person name="Mewes H.-W."/>
            <person name="Mayer K.F.X."/>
            <person name="Kaul S."/>
            <person name="Town C.D."/>
            <person name="Koo H.L."/>
            <person name="Tallon L.J."/>
            <person name="Jenkins J."/>
            <person name="Rooney T."/>
            <person name="Rizzo M."/>
            <person name="Walts A."/>
            <person name="Utterback T."/>
            <person name="Fujii C.Y."/>
            <person name="Shea T.P."/>
            <person name="Creasy T.H."/>
            <person name="Haas B."/>
            <person name="Maiti R."/>
            <person name="Wu D."/>
            <person name="Peterson J."/>
            <person name="Van Aken S."/>
            <person name="Pai G."/>
            <person name="Militscher J."/>
            <person name="Sellers P."/>
            <person name="Gill J.E."/>
            <person name="Feldblyum T.V."/>
            <person name="Preuss D."/>
            <person name="Lin X."/>
            <person name="Nierman W.C."/>
            <person name="Salzberg S.L."/>
            <person name="White O."/>
            <person name="Venter J.C."/>
            <person name="Fraser C.M."/>
            <person name="Kaneko T."/>
            <person name="Nakamura Y."/>
            <person name="Sato S."/>
            <person name="Kato T."/>
            <person name="Asamizu E."/>
            <person name="Sasamoto S."/>
            <person name="Kimura T."/>
            <person name="Idesawa K."/>
            <person name="Kawashima K."/>
            <person name="Kishida Y."/>
            <person name="Kiyokawa C."/>
            <person name="Kohara M."/>
            <person name="Matsumoto M."/>
            <person name="Matsuno A."/>
            <person name="Muraki A."/>
            <person name="Nakayama S."/>
            <person name="Nakazaki N."/>
            <person name="Shinpo S."/>
            <person name="Takeuchi C."/>
            <person name="Wada T."/>
            <person name="Watanabe A."/>
            <person name="Yamada M."/>
            <person name="Yasuda M."/>
            <person name="Tabata S."/>
        </authorList>
    </citation>
    <scope>NUCLEOTIDE SEQUENCE [LARGE SCALE GENOMIC DNA]</scope>
    <source>
        <strain>cv. Columbia</strain>
    </source>
</reference>
<reference key="5">
    <citation type="journal article" date="2017" name="Plant J.">
        <title>Araport11: a complete reannotation of the Arabidopsis thaliana reference genome.</title>
        <authorList>
            <person name="Cheng C.Y."/>
            <person name="Krishnakumar V."/>
            <person name="Chan A.P."/>
            <person name="Thibaud-Nissen F."/>
            <person name="Schobel S."/>
            <person name="Town C.D."/>
        </authorList>
    </citation>
    <scope>GENOME REANNOTATION</scope>
    <source>
        <strain>cv. Columbia</strain>
    </source>
</reference>
<reference key="6">
    <citation type="journal article" date="2003" name="Science">
        <title>Empirical analysis of transcriptional activity in the Arabidopsis genome.</title>
        <authorList>
            <person name="Yamada K."/>
            <person name="Lim J."/>
            <person name="Dale J.M."/>
            <person name="Chen H."/>
            <person name="Shinn P."/>
            <person name="Palm C.J."/>
            <person name="Southwick A.M."/>
            <person name="Wu H.C."/>
            <person name="Kim C.J."/>
            <person name="Nguyen M."/>
            <person name="Pham P.K."/>
            <person name="Cheuk R.F."/>
            <person name="Karlin-Newmann G."/>
            <person name="Liu S.X."/>
            <person name="Lam B."/>
            <person name="Sakano H."/>
            <person name="Wu T."/>
            <person name="Yu G."/>
            <person name="Miranda M."/>
            <person name="Quach H.L."/>
            <person name="Tripp M."/>
            <person name="Chang C.H."/>
            <person name="Lee J.M."/>
            <person name="Toriumi M.J."/>
            <person name="Chan M.M."/>
            <person name="Tang C.C."/>
            <person name="Onodera C.S."/>
            <person name="Deng J.M."/>
            <person name="Akiyama K."/>
            <person name="Ansari Y."/>
            <person name="Arakawa T."/>
            <person name="Banh J."/>
            <person name="Banno F."/>
            <person name="Bowser L."/>
            <person name="Brooks S.Y."/>
            <person name="Carninci P."/>
            <person name="Chao Q."/>
            <person name="Choy N."/>
            <person name="Enju A."/>
            <person name="Goldsmith A.D."/>
            <person name="Gurjal M."/>
            <person name="Hansen N.F."/>
            <person name="Hayashizaki Y."/>
            <person name="Johnson-Hopson C."/>
            <person name="Hsuan V.W."/>
            <person name="Iida K."/>
            <person name="Karnes M."/>
            <person name="Khan S."/>
            <person name="Koesema E."/>
            <person name="Ishida J."/>
            <person name="Jiang P.X."/>
            <person name="Jones T."/>
            <person name="Kawai J."/>
            <person name="Kamiya A."/>
            <person name="Meyers C."/>
            <person name="Nakajima M."/>
            <person name="Narusaka M."/>
            <person name="Seki M."/>
            <person name="Sakurai T."/>
            <person name="Satou M."/>
            <person name="Tamse R."/>
            <person name="Vaysberg M."/>
            <person name="Wallender E.K."/>
            <person name="Wong C."/>
            <person name="Yamamura Y."/>
            <person name="Yuan S."/>
            <person name="Shinozaki K."/>
            <person name="Davis R.W."/>
            <person name="Theologis A."/>
            <person name="Ecker J.R."/>
        </authorList>
    </citation>
    <scope>NUCLEOTIDE SEQUENCE [LARGE SCALE MRNA]</scope>
    <source>
        <strain>cv. Columbia</strain>
    </source>
</reference>
<reference key="7">
    <citation type="submission" date="2005-03" db="EMBL/GenBank/DDBJ databases">
        <title>Large-scale analysis of RIKEN Arabidopsis full-length (RAFL) cDNAs.</title>
        <authorList>
            <person name="Totoki Y."/>
            <person name="Seki M."/>
            <person name="Ishida J."/>
            <person name="Nakajima M."/>
            <person name="Enju A."/>
            <person name="Kamiya A."/>
            <person name="Narusaka M."/>
            <person name="Shin-i T."/>
            <person name="Nakagawa M."/>
            <person name="Sakamoto N."/>
            <person name="Oishi K."/>
            <person name="Kohara Y."/>
            <person name="Kobayashi M."/>
            <person name="Toyoda A."/>
            <person name="Sakaki Y."/>
            <person name="Sakurai T."/>
            <person name="Iida K."/>
            <person name="Akiyama K."/>
            <person name="Satou M."/>
            <person name="Toyoda T."/>
            <person name="Konagaya A."/>
            <person name="Carninci P."/>
            <person name="Kawai J."/>
            <person name="Hayashizaki Y."/>
            <person name="Shinozaki K."/>
        </authorList>
    </citation>
    <scope>NUCLEOTIDE SEQUENCE [LARGE SCALE MRNA] OF 123-306</scope>
    <source>
        <strain>cv. Columbia</strain>
    </source>
</reference>
<reference key="8">
    <citation type="journal article" date="2001" name="FEBS Lett.">
        <title>Functional reconstitution of Arabidopsis thaliana plant uncoupling mitochondrial protein (AtPUMP1) expressed in Escherichia coli.</title>
        <authorList>
            <person name="Borecky J."/>
            <person name="Maia I.G."/>
            <person name="Costa A.D."/>
            <person name="Jezek P."/>
            <person name="Chaimovich H."/>
            <person name="de Andrade P.B."/>
            <person name="Vercesi A.E."/>
            <person name="Arruda P."/>
        </authorList>
    </citation>
    <scope>FUNCTION</scope>
</reference>
<reference key="9">
    <citation type="journal article" date="2003" name="J. Bioenerg. Biomembr.">
        <title>Overexpression of plant uncoupling mitochondrial protein in transgenic tobacco increases tolerance to oxidative stress.</title>
        <authorList>
            <person name="Brandalise M."/>
            <person name="Maia I.G."/>
            <person name="Borecky J."/>
            <person name="Vercesi A.E."/>
            <person name="Arruda P."/>
        </authorList>
    </citation>
    <scope>FUNCTION</scope>
</reference>
<reference key="10">
    <citation type="journal article" date="2005" name="Plant Mol. Biol.">
        <title>Stress-induced co-expression of alternative respiratory chain components in Arabidopsis thaliana.</title>
        <authorList>
            <person name="Clifton R."/>
            <person name="Lister R."/>
            <person name="Parker K.L."/>
            <person name="Sappl P.G."/>
            <person name="Elhafez D."/>
            <person name="Millar A.H."/>
            <person name="Day D.A."/>
            <person name="Whelan J."/>
        </authorList>
    </citation>
    <scope>INDUCTION BY CHLORAMPHENICOL</scope>
</reference>
<reference key="11">
    <citation type="journal article" date="2006" name="J. Exp. Bot.">
        <title>The plant energy-dissipating mitochondrial systems: depicting the genomic structure and the expression profiles of the gene families of uncoupling protein and alternative oxidase in monocots and dicots.</title>
        <authorList>
            <person name="Borecky J."/>
            <person name="Nogueira F.T."/>
            <person name="de Oliveira K.A."/>
            <person name="Maia I.G."/>
            <person name="Vercesi A.E."/>
            <person name="Arruda P."/>
        </authorList>
    </citation>
    <scope>GENE FAMILY</scope>
    <scope>NOMENCLATURE</scope>
</reference>
<reference key="12">
    <citation type="journal article" date="2006" name="Proc. Natl. Acad. Sci. U.S.A.">
        <title>Mitochondrial uncoupling protein is required for efficient photosynthesis.</title>
        <authorList>
            <person name="Sweetlove L.J."/>
            <person name="Lytovchenko A."/>
            <person name="Morgan M."/>
            <person name="Nunes-Nesi A."/>
            <person name="Taylor N.L."/>
            <person name="Baxter C.J."/>
            <person name="Eickmeier I."/>
            <person name="Fernie A.R."/>
        </authorList>
    </citation>
    <scope>FUNCTION</scope>
    <scope>TISSUE SPECIFICITY</scope>
    <scope>DISRUPTION PHENOTYPE</scope>
</reference>
<reference key="13">
    <citation type="journal article" date="2007" name="Biochim. Biophys. Acta">
        <title>Mutational analysis of Arabidopsis thaliana plant uncoupling mitochondrial protein.</title>
        <authorList>
            <person name="Favaro R.D."/>
            <person name="Borecky J."/>
            <person name="Colombi D."/>
            <person name="Vercesi A.E."/>
            <person name="Maia I.G."/>
        </authorList>
    </citation>
    <scope>FUNCTION</scope>
    <scope>BIOPHYSICOCHEMICAL PROPERTIES</scope>
    <scope>MUTAGENESIS OF CYS-28; HIS-83; LYS-147; ARG-155 AND TYR-269</scope>
</reference>
<reference key="14">
    <citation type="journal article" date="2007" name="Mol. Cell. Proteomics">
        <title>Multidimensional protein identification technology (MudPIT) analysis of ubiquitinated proteins in plants.</title>
        <authorList>
            <person name="Maor R."/>
            <person name="Jones A."/>
            <person name="Nuehse T.S."/>
            <person name="Studholme D.J."/>
            <person name="Peck S.C."/>
            <person name="Shirasu K."/>
        </authorList>
    </citation>
    <scope>IDENTIFICATION BY MASS SPECTROMETRY [LARGE SCALE ANALYSIS]</scope>
    <source>
        <strain>cv. Landsberg erecta</strain>
    </source>
</reference>
<reference key="15">
    <citation type="journal article" date="2009" name="Plant Cell Physiol.">
        <title>Differential gene expression profiles of the mitochondrial respiratory components in illuminated Arabidopsis leaves.</title>
        <authorList>
            <person name="Yoshida K."/>
            <person name="Noguchi K."/>
        </authorList>
    </citation>
    <scope>INDUCTION BY HIGH LIGHT</scope>
</reference>
<reference key="16">
    <citation type="journal article" date="2009" name="Plant Cell Physiol.">
        <title>Genetically modified Arabidopsis thaliana cells reveal the involvement of the mitochondrial fatty acid composition in membrane basal and uncoupling protein-mediated proton leaks.</title>
        <authorList>
            <person name="Hourton-Cabassa C."/>
            <person name="Matos A.R."/>
            <person name="Arrabaca J."/>
            <person name="Demandre C."/>
            <person name="Zachowski A."/>
            <person name="Moreau F."/>
        </authorList>
    </citation>
    <scope>FUNCTION</scope>
</reference>
<reference key="17">
    <citation type="journal article" date="2011" name="PLoS ONE">
        <title>An Arabidopsis mitochondrial uncoupling protein confers tolerance to drought and salt stress in transgenic tobacco plants.</title>
        <authorList>
            <person name="Begcy K."/>
            <person name="Mariano E.D."/>
            <person name="Mattiello L."/>
            <person name="Nunes A.V."/>
            <person name="Mazzafera P."/>
            <person name="Maia I.G."/>
            <person name="Menossi M."/>
        </authorList>
    </citation>
    <scope>FUNCTION</scope>
</reference>
<evidence type="ECO:0000250" key="1"/>
<evidence type="ECO:0000255" key="2"/>
<evidence type="ECO:0000269" key="3">
    <source>
    </source>
</evidence>
<evidence type="ECO:0000269" key="4">
    <source>
    </source>
</evidence>
<evidence type="ECO:0000269" key="5">
    <source>
    </source>
</evidence>
<evidence type="ECO:0000269" key="6">
    <source>
    </source>
</evidence>
<evidence type="ECO:0000269" key="7">
    <source>
    </source>
</evidence>
<evidence type="ECO:0000269" key="8">
    <source>
    </source>
</evidence>
<evidence type="ECO:0000269" key="9">
    <source>
    </source>
</evidence>
<evidence type="ECO:0000269" key="10">
    <source>
    </source>
</evidence>
<evidence type="ECO:0000269" key="11">
    <source>
    </source>
</evidence>
<evidence type="ECO:0000305" key="12"/>
<evidence type="ECO:0000305" key="13">
    <source>
    </source>
</evidence>